<accession>Q4QLE5</accession>
<sequence>MAKRKKKEVFDWEDEDQEEIIWVSKSEIKRDAEDLKQLGEKIVNLTKANLAKIPLDESLLDAIELAQRLQKEARRRQLQYIGKLFRGIDVEPIREALDKIENKHNQQQAMLHKIEKVCDELVEKGDVALTDLLNDYPDGDRQQLRNLIRSAQKELEQNKPSKAYREIYQMLKVLMLED</sequence>
<dbReference type="EMBL" id="CP000057">
    <property type="protein sequence ID" value="AAX88152.1"/>
    <property type="molecule type" value="Genomic_DNA"/>
</dbReference>
<dbReference type="RefSeq" id="WP_011272407.1">
    <property type="nucleotide sequence ID" value="NC_007146.2"/>
</dbReference>
<dbReference type="SMR" id="Q4QLE5"/>
<dbReference type="KEGG" id="hit:NTHI1319"/>
<dbReference type="HOGENOM" id="CLU_106757_2_0_6"/>
<dbReference type="Proteomes" id="UP000002525">
    <property type="component" value="Chromosome"/>
</dbReference>
<dbReference type="GO" id="GO:0005829">
    <property type="term" value="C:cytosol"/>
    <property type="evidence" value="ECO:0007669"/>
    <property type="project" value="TreeGrafter"/>
</dbReference>
<dbReference type="GO" id="GO:0043022">
    <property type="term" value="F:ribosome binding"/>
    <property type="evidence" value="ECO:0007669"/>
    <property type="project" value="UniProtKB-UniRule"/>
</dbReference>
<dbReference type="GO" id="GO:0019843">
    <property type="term" value="F:rRNA binding"/>
    <property type="evidence" value="ECO:0007669"/>
    <property type="project" value="UniProtKB-UniRule"/>
</dbReference>
<dbReference type="GO" id="GO:1902626">
    <property type="term" value="P:assembly of large subunit precursor of preribosome"/>
    <property type="evidence" value="ECO:0007669"/>
    <property type="project" value="UniProtKB-UniRule"/>
</dbReference>
<dbReference type="CDD" id="cd16331">
    <property type="entry name" value="YjgA-like"/>
    <property type="match status" value="1"/>
</dbReference>
<dbReference type="FunFam" id="1.10.60.30:FF:000001">
    <property type="entry name" value="UPF0307 protein YjgA"/>
    <property type="match status" value="1"/>
</dbReference>
<dbReference type="FunFam" id="1.10.60.30:FF:000002">
    <property type="entry name" value="UPF0307 protein YjgA"/>
    <property type="match status" value="1"/>
</dbReference>
<dbReference type="Gene3D" id="1.10.60.30">
    <property type="entry name" value="PSPTO4464-like domains"/>
    <property type="match status" value="2"/>
</dbReference>
<dbReference type="HAMAP" id="MF_00765">
    <property type="entry name" value="DarP"/>
    <property type="match status" value="1"/>
</dbReference>
<dbReference type="InterPro" id="IPR006839">
    <property type="entry name" value="DarP"/>
</dbReference>
<dbReference type="InterPro" id="IPR023153">
    <property type="entry name" value="DarP_sf"/>
</dbReference>
<dbReference type="NCBIfam" id="NF003593">
    <property type="entry name" value="PRK05255.1-1"/>
    <property type="match status" value="1"/>
</dbReference>
<dbReference type="PANTHER" id="PTHR38101">
    <property type="entry name" value="UPF0307 PROTEIN YJGA"/>
    <property type="match status" value="1"/>
</dbReference>
<dbReference type="PANTHER" id="PTHR38101:SF1">
    <property type="entry name" value="UPF0307 PROTEIN YJGA"/>
    <property type="match status" value="1"/>
</dbReference>
<dbReference type="Pfam" id="PF04751">
    <property type="entry name" value="DarP"/>
    <property type="match status" value="1"/>
</dbReference>
<dbReference type="PIRSF" id="PIRSF016183">
    <property type="entry name" value="UCP016183"/>
    <property type="match status" value="1"/>
</dbReference>
<dbReference type="SUPFAM" id="SSF158710">
    <property type="entry name" value="PSPTO4464-like"/>
    <property type="match status" value="1"/>
</dbReference>
<reference key="1">
    <citation type="journal article" date="2005" name="J. Bacteriol.">
        <title>Genomic sequence of an otitis media isolate of nontypeable Haemophilus influenzae: comparative study with H. influenzae serotype d, strain KW20.</title>
        <authorList>
            <person name="Harrison A."/>
            <person name="Dyer D.W."/>
            <person name="Gillaspy A."/>
            <person name="Ray W.C."/>
            <person name="Mungur R."/>
            <person name="Carson M.B."/>
            <person name="Zhong H."/>
            <person name="Gipson J."/>
            <person name="Gipson M."/>
            <person name="Johnson L.S."/>
            <person name="Lewis L."/>
            <person name="Bakaletz L.O."/>
            <person name="Munson R.S. Jr."/>
        </authorList>
    </citation>
    <scope>NUCLEOTIDE SEQUENCE [LARGE SCALE GENOMIC DNA]</scope>
    <source>
        <strain>86-028NP</strain>
    </source>
</reference>
<evidence type="ECO:0000255" key="1">
    <source>
        <dbReference type="HAMAP-Rule" id="MF_00765"/>
    </source>
</evidence>
<comment type="function">
    <text evidence="1">Member of a network of 50S ribosomal subunit biogenesis factors which assembles along the 30S-50S interface, preventing incorrect 23S rRNA structures from forming. Promotes peptidyl transferase center (PTC) maturation.</text>
</comment>
<comment type="subcellular location">
    <subcellularLocation>
        <location evidence="1">Cytoplasm</location>
    </subcellularLocation>
    <text evidence="1">Associates with late stage pre-50S ribosomal subunits.</text>
</comment>
<comment type="similarity">
    <text evidence="1">Belongs to the DarP family.</text>
</comment>
<gene>
    <name evidence="1" type="primary">darP</name>
    <name type="ordered locus">NTHI1319</name>
</gene>
<feature type="chain" id="PRO_0000257629" description="Dual-action ribosomal maturation protein DarP">
    <location>
        <begin position="1"/>
        <end position="178"/>
    </location>
</feature>
<protein>
    <recommendedName>
        <fullName evidence="1">Dual-action ribosomal maturation protein DarP</fullName>
    </recommendedName>
    <alternativeName>
        <fullName evidence="1">Large ribosomal subunit assembly factor DarP</fullName>
    </alternativeName>
</protein>
<proteinExistence type="inferred from homology"/>
<name>DARP_HAEI8</name>
<keyword id="KW-0963">Cytoplasm</keyword>
<keyword id="KW-0690">Ribosome biogenesis</keyword>
<keyword id="KW-0694">RNA-binding</keyword>
<keyword id="KW-0699">rRNA-binding</keyword>
<organism>
    <name type="scientific">Haemophilus influenzae (strain 86-028NP)</name>
    <dbReference type="NCBI Taxonomy" id="281310"/>
    <lineage>
        <taxon>Bacteria</taxon>
        <taxon>Pseudomonadati</taxon>
        <taxon>Pseudomonadota</taxon>
        <taxon>Gammaproteobacteria</taxon>
        <taxon>Pasteurellales</taxon>
        <taxon>Pasteurellaceae</taxon>
        <taxon>Haemophilus</taxon>
    </lineage>
</organism>